<sequence>MGSTMEPPGGAYLHLGAVTSPVGTARVLQLAFGCTTFSLVAHRGGFAGVQGTFCMAAWGFCFAVSALVVACEFTRLHGCLRLSWGNFTAAFAMLATLLCATAAVLYPLYFARRECSPEPAGCAARDFRLAASVFAGLLFLAYAVEVALTRARPGQVSSYMATVSGLLKIVQAFVACIIFGALVHDSRYGRYVATQWCVAVYSLCFLATVAVVALSVMGHTGGLGCPFDRLVVVYTFLAVLLYLSAAVIWPVFCFDPKYGEPKRPPNCARGSCPWDSQLVVAIFTYVNLLLYVVDLAYSQRIRFVPSL</sequence>
<keyword id="KW-0472">Membrane</keyword>
<keyword id="KW-1185">Reference proteome</keyword>
<keyword id="KW-0677">Repeat</keyword>
<keyword id="KW-0812">Transmembrane</keyword>
<keyword id="KW-1133">Transmembrane helix</keyword>
<protein>
    <recommendedName>
        <fullName>Myeloid-associated differentiation marker-like protein 2</fullName>
    </recommendedName>
</protein>
<reference key="1">
    <citation type="journal article" date="2006" name="Nature">
        <title>DNA sequence of human chromosome 17 and analysis of rearrangement in the human lineage.</title>
        <authorList>
            <person name="Zody M.C."/>
            <person name="Garber M."/>
            <person name="Adams D.J."/>
            <person name="Sharpe T."/>
            <person name="Harrow J."/>
            <person name="Lupski J.R."/>
            <person name="Nicholson C."/>
            <person name="Searle S.M."/>
            <person name="Wilming L."/>
            <person name="Young S.K."/>
            <person name="Abouelleil A."/>
            <person name="Allen N.R."/>
            <person name="Bi W."/>
            <person name="Bloom T."/>
            <person name="Borowsky M.L."/>
            <person name="Bugalter B.E."/>
            <person name="Butler J."/>
            <person name="Chang J.L."/>
            <person name="Chen C.-K."/>
            <person name="Cook A."/>
            <person name="Corum B."/>
            <person name="Cuomo C.A."/>
            <person name="de Jong P.J."/>
            <person name="DeCaprio D."/>
            <person name="Dewar K."/>
            <person name="FitzGerald M."/>
            <person name="Gilbert J."/>
            <person name="Gibson R."/>
            <person name="Gnerre S."/>
            <person name="Goldstein S."/>
            <person name="Grafham D.V."/>
            <person name="Grocock R."/>
            <person name="Hafez N."/>
            <person name="Hagopian D.S."/>
            <person name="Hart E."/>
            <person name="Norman C.H."/>
            <person name="Humphray S."/>
            <person name="Jaffe D.B."/>
            <person name="Jones M."/>
            <person name="Kamal M."/>
            <person name="Khodiyar V.K."/>
            <person name="LaButti K."/>
            <person name="Laird G."/>
            <person name="Lehoczky J."/>
            <person name="Liu X."/>
            <person name="Lokyitsang T."/>
            <person name="Loveland J."/>
            <person name="Lui A."/>
            <person name="Macdonald P."/>
            <person name="Major J.E."/>
            <person name="Matthews L."/>
            <person name="Mauceli E."/>
            <person name="McCarroll S.A."/>
            <person name="Mihalev A.H."/>
            <person name="Mudge J."/>
            <person name="Nguyen C."/>
            <person name="Nicol R."/>
            <person name="O'Leary S.B."/>
            <person name="Osoegawa K."/>
            <person name="Schwartz D.C."/>
            <person name="Shaw-Smith C."/>
            <person name="Stankiewicz P."/>
            <person name="Steward C."/>
            <person name="Swarbreck D."/>
            <person name="Venkataraman V."/>
            <person name="Whittaker C.A."/>
            <person name="Yang X."/>
            <person name="Zimmer A.R."/>
            <person name="Bradley A."/>
            <person name="Hubbard T."/>
            <person name="Birren B.W."/>
            <person name="Rogers J."/>
            <person name="Lander E.S."/>
            <person name="Nusbaum C."/>
        </authorList>
    </citation>
    <scope>NUCLEOTIDE SEQUENCE [LARGE SCALE GENOMIC DNA]</scope>
</reference>
<reference key="2">
    <citation type="journal article" date="2004" name="Genome Res.">
        <title>The status, quality, and expansion of the NIH full-length cDNA project: the Mammalian Gene Collection (MGC).</title>
        <authorList>
            <consortium name="The MGC Project Team"/>
        </authorList>
    </citation>
    <scope>NUCLEOTIDE SEQUENCE [LARGE SCALE MRNA]</scope>
    <source>
        <tissue>Brain</tissue>
        <tissue>Placenta</tissue>
    </source>
</reference>
<gene>
    <name type="primary">MYADML2</name>
</gene>
<organism>
    <name type="scientific">Homo sapiens</name>
    <name type="common">Human</name>
    <dbReference type="NCBI Taxonomy" id="9606"/>
    <lineage>
        <taxon>Eukaryota</taxon>
        <taxon>Metazoa</taxon>
        <taxon>Chordata</taxon>
        <taxon>Craniata</taxon>
        <taxon>Vertebrata</taxon>
        <taxon>Euteleostomi</taxon>
        <taxon>Mammalia</taxon>
        <taxon>Eutheria</taxon>
        <taxon>Euarchontoglires</taxon>
        <taxon>Primates</taxon>
        <taxon>Haplorrhini</taxon>
        <taxon>Catarrhini</taxon>
        <taxon>Hominidae</taxon>
        <taxon>Homo</taxon>
    </lineage>
</organism>
<comment type="interaction">
    <interactant intactId="EBI-17641390">
        <id>A6NDP7</id>
    </interactant>
    <interactant intactId="EBI-13059134">
        <id>Q13520</id>
        <label>AQP6</label>
    </interactant>
    <organismsDiffer>false</organismsDiffer>
    <experiments>3</experiments>
</comment>
<comment type="interaction">
    <interactant intactId="EBI-17641390">
        <id>A6NDP7</id>
    </interactant>
    <interactant intactId="EBI-11343438">
        <id>Q3SXY8</id>
        <label>ARL13B</label>
    </interactant>
    <organismsDiffer>false</organismsDiffer>
    <experiments>3</experiments>
</comment>
<comment type="interaction">
    <interactant intactId="EBI-17641390">
        <id>A6NDP7</id>
    </interactant>
    <interactant intactId="EBI-7797864">
        <id>P11912</id>
        <label>CD79A</label>
    </interactant>
    <organismsDiffer>false</organismsDiffer>
    <experiments>3</experiments>
</comment>
<comment type="interaction">
    <interactant intactId="EBI-17641390">
        <id>A6NDP7</id>
    </interactant>
    <interactant intactId="EBI-372265">
        <id>P21964</id>
        <label>COMT</label>
    </interactant>
    <organismsDiffer>false</organismsDiffer>
    <experiments>3</experiments>
</comment>
<comment type="interaction">
    <interactant intactId="EBI-17641390">
        <id>A6NDP7</id>
    </interactant>
    <interactant intactId="EBI-17640610">
        <id>P34910-2</id>
        <label>EVI2B</label>
    </interactant>
    <organismsDiffer>false</organismsDiffer>
    <experiments>3</experiments>
</comment>
<comment type="interaction">
    <interactant intactId="EBI-17641390">
        <id>A6NDP7</id>
    </interactant>
    <interactant intactId="EBI-18304435">
        <id>Q5JX71</id>
        <label>FAM209A</label>
    </interactant>
    <organismsDiffer>false</organismsDiffer>
    <experiments>3</experiments>
</comment>
<comment type="interaction">
    <interactant intactId="EBI-17641390">
        <id>A6NDP7</id>
    </interactant>
    <interactant intactId="EBI-13345167">
        <id>Q8TDT2</id>
        <label>GPR152</label>
    </interactant>
    <organismsDiffer>false</organismsDiffer>
    <experiments>3</experiments>
</comment>
<comment type="interaction">
    <interactant intactId="EBI-17641390">
        <id>A6NDP7</id>
    </interactant>
    <interactant intactId="EBI-11721746">
        <id>Q8TED1</id>
        <label>GPX8</label>
    </interactant>
    <organismsDiffer>false</organismsDiffer>
    <experiments>3</experiments>
</comment>
<comment type="interaction">
    <interactant intactId="EBI-17641390">
        <id>A6NDP7</id>
    </interactant>
    <interactant intactId="EBI-716063">
        <id>Q13113</id>
        <label>PDZK1IP1</label>
    </interactant>
    <organismsDiffer>false</organismsDiffer>
    <experiments>3</experiments>
</comment>
<comment type="interaction">
    <interactant intactId="EBI-17641390">
        <id>A6NDP7</id>
    </interactant>
    <interactant intactId="EBI-2340249">
        <id>Q96GF1</id>
        <label>RNF185</label>
    </interactant>
    <organismsDiffer>false</organismsDiffer>
    <experiments>3</experiments>
</comment>
<comment type="interaction">
    <interactant intactId="EBI-17641390">
        <id>A6NDP7</id>
    </interactant>
    <interactant intactId="EBI-3923031">
        <id>Q14973</id>
        <label>SLC10A1</label>
    </interactant>
    <organismsDiffer>false</organismsDiffer>
    <experiments>3</experiments>
</comment>
<comment type="subcellular location">
    <subcellularLocation>
        <location evidence="3">Membrane</location>
        <topology evidence="3">Multi-pass membrane protein</topology>
    </subcellularLocation>
</comment>
<comment type="similarity">
    <text evidence="3">Belongs to the MAL family.</text>
</comment>
<accession>A6NDP7</accession>
<proteinExistence type="evidence at protein level"/>
<dbReference type="EMBL" id="AC145207">
    <property type="status" value="NOT_ANNOTATED_CDS"/>
    <property type="molecule type" value="Genomic_DNA"/>
</dbReference>
<dbReference type="EMBL" id="BC029306">
    <property type="status" value="NOT_ANNOTATED_CDS"/>
    <property type="molecule type" value="mRNA"/>
</dbReference>
<dbReference type="CCDS" id="CCDS45815.1"/>
<dbReference type="RefSeq" id="NP_001138585.2">
    <property type="nucleotide sequence ID" value="NM_001145113.3"/>
</dbReference>
<dbReference type="SMR" id="A6NDP7"/>
<dbReference type="BioGRID" id="129090">
    <property type="interactions" value="11"/>
</dbReference>
<dbReference type="FunCoup" id="A6NDP7">
    <property type="interactions" value="109"/>
</dbReference>
<dbReference type="IntAct" id="A6NDP7">
    <property type="interactions" value="11"/>
</dbReference>
<dbReference type="STRING" id="9606.ENSP00000386702"/>
<dbReference type="BioMuta" id="MYADML2"/>
<dbReference type="jPOST" id="A6NDP7"/>
<dbReference type="MassIVE" id="A6NDP7"/>
<dbReference type="PaxDb" id="9606-ENSP00000386702"/>
<dbReference type="PeptideAtlas" id="A6NDP7"/>
<dbReference type="Antibodypedia" id="71397">
    <property type="antibodies" value="22 antibodies from 10 providers"/>
</dbReference>
<dbReference type="DNASU" id="255275"/>
<dbReference type="Ensembl" id="ENST00000409745.2">
    <property type="protein sequence ID" value="ENSP00000386702.2"/>
    <property type="gene ID" value="ENSG00000185105.5"/>
</dbReference>
<dbReference type="GeneID" id="255275"/>
<dbReference type="KEGG" id="hsa:255275"/>
<dbReference type="MANE-Select" id="ENST00000409745.2">
    <property type="protein sequence ID" value="ENSP00000386702.2"/>
    <property type="RefSeq nucleotide sequence ID" value="NM_001145113.3"/>
    <property type="RefSeq protein sequence ID" value="NP_001138585.2"/>
</dbReference>
<dbReference type="UCSC" id="uc010wvf.1">
    <property type="organism name" value="human"/>
</dbReference>
<dbReference type="AGR" id="HGNC:34548"/>
<dbReference type="CTD" id="255275"/>
<dbReference type="GeneCards" id="MYADML2"/>
<dbReference type="HGNC" id="HGNC:34548">
    <property type="gene designation" value="MYADML2"/>
</dbReference>
<dbReference type="HPA" id="ENSG00000185105">
    <property type="expression patterns" value="Tissue enriched (skeletal)"/>
</dbReference>
<dbReference type="neXtProt" id="NX_A6NDP7"/>
<dbReference type="OpenTargets" id="ENSG00000185105"/>
<dbReference type="PharmGKB" id="PA164723246"/>
<dbReference type="VEuPathDB" id="HostDB:ENSG00000185105"/>
<dbReference type="eggNOG" id="KOG4788">
    <property type="taxonomic scope" value="Eukaryota"/>
</dbReference>
<dbReference type="GeneTree" id="ENSGT00950000182933"/>
<dbReference type="HOGENOM" id="CLU_068368_0_0_1"/>
<dbReference type="InParanoid" id="A6NDP7"/>
<dbReference type="OMA" id="HLSWGNF"/>
<dbReference type="OrthoDB" id="8737882at2759"/>
<dbReference type="PAN-GO" id="A6NDP7">
    <property type="GO annotations" value="0 GO annotations based on evolutionary models"/>
</dbReference>
<dbReference type="PhylomeDB" id="A6NDP7"/>
<dbReference type="TreeFam" id="TF331088"/>
<dbReference type="PathwayCommons" id="A6NDP7"/>
<dbReference type="SignaLink" id="A6NDP7"/>
<dbReference type="BioGRID-ORCS" id="255275">
    <property type="hits" value="13 hits in 1149 CRISPR screens"/>
</dbReference>
<dbReference type="GenomeRNAi" id="255275"/>
<dbReference type="Pharos" id="A6NDP7">
    <property type="development level" value="Tdark"/>
</dbReference>
<dbReference type="PRO" id="PR:A6NDP7"/>
<dbReference type="Proteomes" id="UP000005640">
    <property type="component" value="Chromosome 17"/>
</dbReference>
<dbReference type="RNAct" id="A6NDP7">
    <property type="molecule type" value="protein"/>
</dbReference>
<dbReference type="Bgee" id="ENSG00000185105">
    <property type="expression patterns" value="Expressed in hindlimb stylopod muscle and 68 other cell types or tissues"/>
</dbReference>
<dbReference type="GO" id="GO:0005737">
    <property type="term" value="C:cytoplasm"/>
    <property type="evidence" value="ECO:0000314"/>
    <property type="project" value="UniProtKB"/>
</dbReference>
<dbReference type="GO" id="GO:0016020">
    <property type="term" value="C:membrane"/>
    <property type="evidence" value="ECO:0007669"/>
    <property type="project" value="UniProtKB-SubCell"/>
</dbReference>
<dbReference type="InterPro" id="IPR008253">
    <property type="entry name" value="Marvel"/>
</dbReference>
<dbReference type="InterPro" id="IPR047123">
    <property type="entry name" value="MYADM-like"/>
</dbReference>
<dbReference type="PANTHER" id="PTHR17068">
    <property type="entry name" value="MYELOID-ASSOCIATED DIFFERENTIATION MARKER MYADM FAMILY MEMBER"/>
    <property type="match status" value="1"/>
</dbReference>
<dbReference type="PANTHER" id="PTHR17068:SF5">
    <property type="entry name" value="MYELOID-ASSOCIATED DIFFERENTIATION MARKER-LIKE PROTEIN 2"/>
    <property type="match status" value="1"/>
</dbReference>
<dbReference type="Pfam" id="PF01284">
    <property type="entry name" value="MARVEL"/>
    <property type="match status" value="2"/>
</dbReference>
<dbReference type="PROSITE" id="PS51225">
    <property type="entry name" value="MARVEL"/>
    <property type="match status" value="2"/>
</dbReference>
<evidence type="ECO:0000255" key="1"/>
<evidence type="ECO:0000255" key="2">
    <source>
        <dbReference type="PROSITE-ProRule" id="PRU00581"/>
    </source>
</evidence>
<evidence type="ECO:0000305" key="3"/>
<name>MADL2_HUMAN</name>
<feature type="chain" id="PRO_0000332206" description="Myeloid-associated differentiation marker-like protein 2">
    <location>
        <begin position="1"/>
        <end position="307"/>
    </location>
</feature>
<feature type="transmembrane region" description="Helical" evidence="1">
    <location>
        <begin position="53"/>
        <end position="73"/>
    </location>
</feature>
<feature type="transmembrane region" description="Helical" evidence="1">
    <location>
        <begin position="90"/>
        <end position="110"/>
    </location>
</feature>
<feature type="transmembrane region" description="Helical" evidence="1">
    <location>
        <begin position="129"/>
        <end position="149"/>
    </location>
</feature>
<feature type="transmembrane region" description="Helical" evidence="1">
    <location>
        <begin position="163"/>
        <end position="183"/>
    </location>
</feature>
<feature type="transmembrane region" description="Helical" evidence="1">
    <location>
        <begin position="198"/>
        <end position="218"/>
    </location>
</feature>
<feature type="transmembrane region" description="Helical" evidence="1">
    <location>
        <begin position="229"/>
        <end position="249"/>
    </location>
</feature>
<feature type="transmembrane region" description="Helical" evidence="1">
    <location>
        <begin position="278"/>
        <end position="298"/>
    </location>
</feature>
<feature type="domain" description="MARVEL 1" evidence="2">
    <location>
        <begin position="17"/>
        <end position="154"/>
    </location>
</feature>
<feature type="domain" description="MARVEL 2" evidence="2">
    <location>
        <begin position="159"/>
        <end position="303"/>
    </location>
</feature>
<feature type="sequence conflict" description="In Ref. 2; BC029306." evidence="3" ref="2">
    <original>S</original>
    <variation>P</variation>
    <location>
        <position position="116"/>
    </location>
</feature>